<comment type="subunit">
    <text evidence="6">Interacts with BT1, BT2 and BT4.</text>
</comment>
<comment type="interaction">
    <interactant intactId="EBI-1394728">
        <id>Q93ZB7</id>
    </interactant>
    <interactant intactId="EBI-541001">
        <id>Q9FMK7</id>
        <label>BT1</label>
    </interactant>
    <organismsDiffer>false</organismsDiffer>
    <experiments>3</experiments>
</comment>
<comment type="subcellular location">
    <subcellularLocation>
        <location evidence="7">Nucleus</location>
    </subcellularLocation>
</comment>
<comment type="sequence caution" evidence="7">
    <conflict type="erroneous gene model prediction">
        <sequence resource="EMBL-CDS" id="AAF01563"/>
    </conflict>
</comment>
<comment type="sequence caution" evidence="7">
    <conflict type="erroneous gene model prediction">
        <sequence resource="EMBL-CDS" id="AAF03453"/>
    </conflict>
</comment>
<name>GTE11_ARATH</name>
<dbReference type="EMBL" id="AC009325">
    <property type="protein sequence ID" value="AAF01563.1"/>
    <property type="status" value="ALT_SEQ"/>
    <property type="molecule type" value="Genomic_DNA"/>
</dbReference>
<dbReference type="EMBL" id="AC010797">
    <property type="protein sequence ID" value="AAF03453.1"/>
    <property type="status" value="ALT_SEQ"/>
    <property type="molecule type" value="Genomic_DNA"/>
</dbReference>
<dbReference type="EMBL" id="CP002686">
    <property type="protein sequence ID" value="AEE73712.1"/>
    <property type="molecule type" value="Genomic_DNA"/>
</dbReference>
<dbReference type="EMBL" id="AY057662">
    <property type="protein sequence ID" value="AAL15293.1"/>
    <property type="molecule type" value="mRNA"/>
</dbReference>
<dbReference type="EMBL" id="AY099729">
    <property type="protein sequence ID" value="AAM20580.1"/>
    <property type="molecule type" value="mRNA"/>
</dbReference>
<dbReference type="EMBL" id="AY128906">
    <property type="protein sequence ID" value="AAM91306.1"/>
    <property type="molecule type" value="mRNA"/>
</dbReference>
<dbReference type="RefSeq" id="NP_566151.1">
    <property type="nucleotide sequence ID" value="NM_111043.3"/>
</dbReference>
<dbReference type="SMR" id="Q93ZB7"/>
<dbReference type="BioGRID" id="6416">
    <property type="interactions" value="9"/>
</dbReference>
<dbReference type="FunCoup" id="Q93ZB7">
    <property type="interactions" value="46"/>
</dbReference>
<dbReference type="IntAct" id="Q93ZB7">
    <property type="interactions" value="5"/>
</dbReference>
<dbReference type="STRING" id="3702.Q93ZB7"/>
<dbReference type="iPTMnet" id="Q93ZB7"/>
<dbReference type="PaxDb" id="3702-AT3G01770.1"/>
<dbReference type="ProteomicsDB" id="248497"/>
<dbReference type="EnsemblPlants" id="AT3G01770.1">
    <property type="protein sequence ID" value="AT3G01770.1"/>
    <property type="gene ID" value="AT3G01770"/>
</dbReference>
<dbReference type="GeneID" id="821083"/>
<dbReference type="Gramene" id="AT3G01770.1">
    <property type="protein sequence ID" value="AT3G01770.1"/>
    <property type="gene ID" value="AT3G01770"/>
</dbReference>
<dbReference type="KEGG" id="ath:AT3G01770"/>
<dbReference type="Araport" id="AT3G01770"/>
<dbReference type="TAIR" id="AT3G01770">
    <property type="gene designation" value="BET10"/>
</dbReference>
<dbReference type="eggNOG" id="KOG1474">
    <property type="taxonomic scope" value="Eukaryota"/>
</dbReference>
<dbReference type="HOGENOM" id="CLU_007920_1_0_1"/>
<dbReference type="InParanoid" id="Q93ZB7"/>
<dbReference type="OMA" id="MKHEEDE"/>
<dbReference type="PhylomeDB" id="Q93ZB7"/>
<dbReference type="PRO" id="PR:Q93ZB7"/>
<dbReference type="Proteomes" id="UP000006548">
    <property type="component" value="Chromosome 3"/>
</dbReference>
<dbReference type="ExpressionAtlas" id="Q93ZB7">
    <property type="expression patterns" value="baseline and differential"/>
</dbReference>
<dbReference type="GO" id="GO:0005634">
    <property type="term" value="C:nucleus"/>
    <property type="evidence" value="ECO:0007669"/>
    <property type="project" value="UniProtKB-SubCell"/>
</dbReference>
<dbReference type="GO" id="GO:0045893">
    <property type="term" value="P:positive regulation of DNA-templated transcription"/>
    <property type="evidence" value="ECO:0000314"/>
    <property type="project" value="UniProtKB"/>
</dbReference>
<dbReference type="GO" id="GO:0009737">
    <property type="term" value="P:response to abscisic acid"/>
    <property type="evidence" value="ECO:0000316"/>
    <property type="project" value="TAIR"/>
</dbReference>
<dbReference type="CDD" id="cd05506">
    <property type="entry name" value="Bromo_plant1"/>
    <property type="match status" value="1"/>
</dbReference>
<dbReference type="FunFam" id="1.20.1270.220:FF:000003">
    <property type="entry name" value="Global transcription factor group E8"/>
    <property type="match status" value="1"/>
</dbReference>
<dbReference type="FunFam" id="1.20.920.10:FF:000050">
    <property type="entry name" value="Transcription factor GTE4"/>
    <property type="match status" value="1"/>
</dbReference>
<dbReference type="Gene3D" id="1.20.1270.220">
    <property type="match status" value="1"/>
</dbReference>
<dbReference type="Gene3D" id="1.20.920.10">
    <property type="entry name" value="Bromodomain-like"/>
    <property type="match status" value="1"/>
</dbReference>
<dbReference type="InterPro" id="IPR001487">
    <property type="entry name" value="Bromodomain"/>
</dbReference>
<dbReference type="InterPro" id="IPR036427">
    <property type="entry name" value="Bromodomain-like_sf"/>
</dbReference>
<dbReference type="InterPro" id="IPR052442">
    <property type="entry name" value="Env_Response_Regulator"/>
</dbReference>
<dbReference type="InterPro" id="IPR037377">
    <property type="entry name" value="GTE_bromo"/>
</dbReference>
<dbReference type="InterPro" id="IPR027353">
    <property type="entry name" value="NET_dom"/>
</dbReference>
<dbReference type="InterPro" id="IPR038336">
    <property type="entry name" value="NET_sf"/>
</dbReference>
<dbReference type="PANTHER" id="PTHR46136:SF1">
    <property type="entry name" value="TRANSCRIPTION FACTOR GTE11-RELATED"/>
    <property type="match status" value="1"/>
</dbReference>
<dbReference type="PANTHER" id="PTHR46136">
    <property type="entry name" value="TRANSCRIPTION FACTOR GTE8"/>
    <property type="match status" value="1"/>
</dbReference>
<dbReference type="Pfam" id="PF17035">
    <property type="entry name" value="BET"/>
    <property type="match status" value="1"/>
</dbReference>
<dbReference type="Pfam" id="PF00439">
    <property type="entry name" value="Bromodomain"/>
    <property type="match status" value="1"/>
</dbReference>
<dbReference type="PRINTS" id="PR00503">
    <property type="entry name" value="BROMODOMAIN"/>
</dbReference>
<dbReference type="SMART" id="SM00297">
    <property type="entry name" value="BROMO"/>
    <property type="match status" value="1"/>
</dbReference>
<dbReference type="SUPFAM" id="SSF47370">
    <property type="entry name" value="Bromodomain"/>
    <property type="match status" value="1"/>
</dbReference>
<dbReference type="PROSITE" id="PS50014">
    <property type="entry name" value="BROMODOMAIN_2"/>
    <property type="match status" value="1"/>
</dbReference>
<dbReference type="PROSITE" id="PS51525">
    <property type="entry name" value="NET"/>
    <property type="match status" value="1"/>
</dbReference>
<reference key="1">
    <citation type="journal article" date="2000" name="Nature">
        <title>Sequence and analysis of chromosome 3 of the plant Arabidopsis thaliana.</title>
        <authorList>
            <person name="Salanoubat M."/>
            <person name="Lemcke K."/>
            <person name="Rieger M."/>
            <person name="Ansorge W."/>
            <person name="Unseld M."/>
            <person name="Fartmann B."/>
            <person name="Valle G."/>
            <person name="Bloecker H."/>
            <person name="Perez-Alonso M."/>
            <person name="Obermaier B."/>
            <person name="Delseny M."/>
            <person name="Boutry M."/>
            <person name="Grivell L.A."/>
            <person name="Mache R."/>
            <person name="Puigdomenech P."/>
            <person name="De Simone V."/>
            <person name="Choisne N."/>
            <person name="Artiguenave F."/>
            <person name="Robert C."/>
            <person name="Brottier P."/>
            <person name="Wincker P."/>
            <person name="Cattolico L."/>
            <person name="Weissenbach J."/>
            <person name="Saurin W."/>
            <person name="Quetier F."/>
            <person name="Schaefer M."/>
            <person name="Mueller-Auer S."/>
            <person name="Gabel C."/>
            <person name="Fuchs M."/>
            <person name="Benes V."/>
            <person name="Wurmbach E."/>
            <person name="Drzonek H."/>
            <person name="Erfle H."/>
            <person name="Jordan N."/>
            <person name="Bangert S."/>
            <person name="Wiedelmann R."/>
            <person name="Kranz H."/>
            <person name="Voss H."/>
            <person name="Holland R."/>
            <person name="Brandt P."/>
            <person name="Nyakatura G."/>
            <person name="Vezzi A."/>
            <person name="D'Angelo M."/>
            <person name="Pallavicini A."/>
            <person name="Toppo S."/>
            <person name="Simionati B."/>
            <person name="Conrad A."/>
            <person name="Hornischer K."/>
            <person name="Kauer G."/>
            <person name="Loehnert T.-H."/>
            <person name="Nordsiek G."/>
            <person name="Reichelt J."/>
            <person name="Scharfe M."/>
            <person name="Schoen O."/>
            <person name="Bargues M."/>
            <person name="Terol J."/>
            <person name="Climent J."/>
            <person name="Navarro P."/>
            <person name="Collado C."/>
            <person name="Perez-Perez A."/>
            <person name="Ottenwaelder B."/>
            <person name="Duchemin D."/>
            <person name="Cooke R."/>
            <person name="Laudie M."/>
            <person name="Berger-Llauro C."/>
            <person name="Purnelle B."/>
            <person name="Masuy D."/>
            <person name="de Haan M."/>
            <person name="Maarse A.C."/>
            <person name="Alcaraz J.-P."/>
            <person name="Cottet A."/>
            <person name="Casacuberta E."/>
            <person name="Monfort A."/>
            <person name="Argiriou A."/>
            <person name="Flores M."/>
            <person name="Liguori R."/>
            <person name="Vitale D."/>
            <person name="Mannhaupt G."/>
            <person name="Haase D."/>
            <person name="Schoof H."/>
            <person name="Rudd S."/>
            <person name="Zaccaria P."/>
            <person name="Mewes H.-W."/>
            <person name="Mayer K.F.X."/>
            <person name="Kaul S."/>
            <person name="Town C.D."/>
            <person name="Koo H.L."/>
            <person name="Tallon L.J."/>
            <person name="Jenkins J."/>
            <person name="Rooney T."/>
            <person name="Rizzo M."/>
            <person name="Walts A."/>
            <person name="Utterback T."/>
            <person name="Fujii C.Y."/>
            <person name="Shea T.P."/>
            <person name="Creasy T.H."/>
            <person name="Haas B."/>
            <person name="Maiti R."/>
            <person name="Wu D."/>
            <person name="Peterson J."/>
            <person name="Van Aken S."/>
            <person name="Pai G."/>
            <person name="Militscher J."/>
            <person name="Sellers P."/>
            <person name="Gill J.E."/>
            <person name="Feldblyum T.V."/>
            <person name="Preuss D."/>
            <person name="Lin X."/>
            <person name="Nierman W.C."/>
            <person name="Salzberg S.L."/>
            <person name="White O."/>
            <person name="Venter J.C."/>
            <person name="Fraser C.M."/>
            <person name="Kaneko T."/>
            <person name="Nakamura Y."/>
            <person name="Sato S."/>
            <person name="Kato T."/>
            <person name="Asamizu E."/>
            <person name="Sasamoto S."/>
            <person name="Kimura T."/>
            <person name="Idesawa K."/>
            <person name="Kawashima K."/>
            <person name="Kishida Y."/>
            <person name="Kiyokawa C."/>
            <person name="Kohara M."/>
            <person name="Matsumoto M."/>
            <person name="Matsuno A."/>
            <person name="Muraki A."/>
            <person name="Nakayama S."/>
            <person name="Nakazaki N."/>
            <person name="Shinpo S."/>
            <person name="Takeuchi C."/>
            <person name="Wada T."/>
            <person name="Watanabe A."/>
            <person name="Yamada M."/>
            <person name="Yasuda M."/>
            <person name="Tabata S."/>
        </authorList>
    </citation>
    <scope>NUCLEOTIDE SEQUENCE [LARGE SCALE GENOMIC DNA]</scope>
    <source>
        <strain>cv. Columbia</strain>
    </source>
</reference>
<reference key="2">
    <citation type="journal article" date="2017" name="Plant J.">
        <title>Araport11: a complete reannotation of the Arabidopsis thaliana reference genome.</title>
        <authorList>
            <person name="Cheng C.Y."/>
            <person name="Krishnakumar V."/>
            <person name="Chan A.P."/>
            <person name="Thibaud-Nissen F."/>
            <person name="Schobel S."/>
            <person name="Town C.D."/>
        </authorList>
    </citation>
    <scope>GENOME REANNOTATION</scope>
    <source>
        <strain>cv. Columbia</strain>
    </source>
</reference>
<reference key="3">
    <citation type="journal article" date="2003" name="Science">
        <title>Empirical analysis of transcriptional activity in the Arabidopsis genome.</title>
        <authorList>
            <person name="Yamada K."/>
            <person name="Lim J."/>
            <person name="Dale J.M."/>
            <person name="Chen H."/>
            <person name="Shinn P."/>
            <person name="Palm C.J."/>
            <person name="Southwick A.M."/>
            <person name="Wu H.C."/>
            <person name="Kim C.J."/>
            <person name="Nguyen M."/>
            <person name="Pham P.K."/>
            <person name="Cheuk R.F."/>
            <person name="Karlin-Newmann G."/>
            <person name="Liu S.X."/>
            <person name="Lam B."/>
            <person name="Sakano H."/>
            <person name="Wu T."/>
            <person name="Yu G."/>
            <person name="Miranda M."/>
            <person name="Quach H.L."/>
            <person name="Tripp M."/>
            <person name="Chang C.H."/>
            <person name="Lee J.M."/>
            <person name="Toriumi M.J."/>
            <person name="Chan M.M."/>
            <person name="Tang C.C."/>
            <person name="Onodera C.S."/>
            <person name="Deng J.M."/>
            <person name="Akiyama K."/>
            <person name="Ansari Y."/>
            <person name="Arakawa T."/>
            <person name="Banh J."/>
            <person name="Banno F."/>
            <person name="Bowser L."/>
            <person name="Brooks S.Y."/>
            <person name="Carninci P."/>
            <person name="Chao Q."/>
            <person name="Choy N."/>
            <person name="Enju A."/>
            <person name="Goldsmith A.D."/>
            <person name="Gurjal M."/>
            <person name="Hansen N.F."/>
            <person name="Hayashizaki Y."/>
            <person name="Johnson-Hopson C."/>
            <person name="Hsuan V.W."/>
            <person name="Iida K."/>
            <person name="Karnes M."/>
            <person name="Khan S."/>
            <person name="Koesema E."/>
            <person name="Ishida J."/>
            <person name="Jiang P.X."/>
            <person name="Jones T."/>
            <person name="Kawai J."/>
            <person name="Kamiya A."/>
            <person name="Meyers C."/>
            <person name="Nakajima M."/>
            <person name="Narusaka M."/>
            <person name="Seki M."/>
            <person name="Sakurai T."/>
            <person name="Satou M."/>
            <person name="Tamse R."/>
            <person name="Vaysberg M."/>
            <person name="Wallender E.K."/>
            <person name="Wong C."/>
            <person name="Yamamura Y."/>
            <person name="Yuan S."/>
            <person name="Shinozaki K."/>
            <person name="Davis R.W."/>
            <person name="Theologis A."/>
            <person name="Ecker J.R."/>
        </authorList>
    </citation>
    <scope>NUCLEOTIDE SEQUENCE [LARGE SCALE MRNA]</scope>
    <source>
        <strain>cv. Columbia</strain>
    </source>
</reference>
<reference key="4">
    <citation type="journal article" date="2002" name="Nucleic Acids Res.">
        <title>Analysis of histone acetyltransferase and histone deacetylase families of Arabidopsis thaliana suggests functional diversification of chromatin modification among multicellular eukaryotes.</title>
        <authorList>
            <person name="Pandey R."/>
            <person name="Mueller A."/>
            <person name="Napoli C.A."/>
            <person name="Selinger D.A."/>
            <person name="Pikaard C.S."/>
            <person name="Richards E.J."/>
            <person name="Bender J."/>
            <person name="Mount D.W."/>
            <person name="Jorgensen R.A."/>
        </authorList>
    </citation>
    <scope>GENE FAMILY</scope>
    <scope>NOMENCLATURE</scope>
</reference>
<reference key="5">
    <citation type="journal article" date="2004" name="Plant Mol. Biol.">
        <title>A novel family of Ca2+/calmodulin-binding proteins involved in transcriptional regulation: interaction with fsh/Ring3 class transcription activators.</title>
        <authorList>
            <person name="Du L."/>
            <person name="Poovaiah B.W."/>
        </authorList>
    </citation>
    <scope>INTERACTION WITH BT1; BT2 AND BT4</scope>
</reference>
<evidence type="ECO:0000250" key="1">
    <source>
        <dbReference type="UniProtKB" id="Q93YS6"/>
    </source>
</evidence>
<evidence type="ECO:0000255" key="2"/>
<evidence type="ECO:0000255" key="3">
    <source>
        <dbReference type="PROSITE-ProRule" id="PRU00035"/>
    </source>
</evidence>
<evidence type="ECO:0000255" key="4">
    <source>
        <dbReference type="PROSITE-ProRule" id="PRU00857"/>
    </source>
</evidence>
<evidence type="ECO:0000256" key="5">
    <source>
        <dbReference type="SAM" id="MobiDB-lite"/>
    </source>
</evidence>
<evidence type="ECO:0000269" key="6">
    <source>
    </source>
</evidence>
<evidence type="ECO:0000305" key="7"/>
<protein>
    <recommendedName>
        <fullName>Transcription factor GTE11</fullName>
    </recommendedName>
    <alternativeName>
        <fullName>BROMODOMAIN AND EXTRATERMINAL DOMAIN PROTEIN 10</fullName>
        <shortName>AtBET10</shortName>
    </alternativeName>
    <alternativeName>
        <fullName>Bromodomain-containing protein GTE11</fullName>
    </alternativeName>
    <alternativeName>
        <fullName>Protein GLOBAL TRANSCRIPTION FACTOR GROUP E11</fullName>
    </alternativeName>
</protein>
<organism>
    <name type="scientific">Arabidopsis thaliana</name>
    <name type="common">Mouse-ear cress</name>
    <dbReference type="NCBI Taxonomy" id="3702"/>
    <lineage>
        <taxon>Eukaryota</taxon>
        <taxon>Viridiplantae</taxon>
        <taxon>Streptophyta</taxon>
        <taxon>Embryophyta</taxon>
        <taxon>Tracheophyta</taxon>
        <taxon>Spermatophyta</taxon>
        <taxon>Magnoliopsida</taxon>
        <taxon>eudicotyledons</taxon>
        <taxon>Gunneridae</taxon>
        <taxon>Pentapetalae</taxon>
        <taxon>rosids</taxon>
        <taxon>malvids</taxon>
        <taxon>Brassicales</taxon>
        <taxon>Brassicaceae</taxon>
        <taxon>Camelineae</taxon>
        <taxon>Arabidopsis</taxon>
    </lineage>
</organism>
<gene>
    <name type="primary">GTE11</name>
    <name type="synonym">BET10</name>
    <name type="ordered locus">At3g01770</name>
    <name type="ORF">F28J7.10</name>
    <name type="ORF">F4P13.32</name>
</gene>
<proteinExistence type="evidence at protein level"/>
<sequence length="620" mass="69881">MTVRNGGFPGDYNRNSFDSPGGCDDSPNASKDDETFGVPRIVLPLSDLSSSERRKWIHTLRQELEQLRSFQKSVGDLLPISKIVTSTPASNVSRPKSFGMSRCSTGPGKRVLPFTATKPEPVTTSTMLRMKQCESLLKRLMSQQHCWLFNTPVDVVKLNIPDYFTIIKHPMDLGTVKSKLTSGTYSSPSEFSADVRLTFRNAMTYNPSDNNVYRFADTLSKFFEVRWKTIEKKSSGTKSEPSNLATLAHKDIAIPEPVAKKRKMNAVKRNSLLEPAKRVMTDEDRVKLGRDLGSLTEFPVQIINFLRDHSSKEERSGDDEIEIDINDLSHDALFQLRDLFDEFLRENQKKDSNGEPCVLELLHGSGPGNSLTQHCDGSELEDEDVDIGNYEHPISHISTVRTEKDSVGGLNQMEDASRGKLSLIEGADGHQDGNSAPKEKELPPEKRYRAALLKNRFADIILKAQEITLNQNEKRDPETLQREKEELELQKKKEKARLQAEAKEAEEARRKAEAQEAKRKLELEREAARQALLEMEKSVEINENTRFLKDLELLKTVNTDQLRNLRDVGSESDGLAVFGFGGSNPLEQLGLFMKHEEDEDESDMLAFPDPGNEVEEGEID</sequence>
<keyword id="KW-0010">Activator</keyword>
<keyword id="KW-0103">Bromodomain</keyword>
<keyword id="KW-0175">Coiled coil</keyword>
<keyword id="KW-0539">Nucleus</keyword>
<keyword id="KW-0597">Phosphoprotein</keyword>
<keyword id="KW-1185">Reference proteome</keyword>
<keyword id="KW-0804">Transcription</keyword>
<keyword id="KW-0805">Transcription regulation</keyword>
<accession>Q93ZB7</accession>
<accession>Q9S7A8</accession>
<feature type="chain" id="PRO_0000406342" description="Transcription factor GTE11">
    <location>
        <begin position="1"/>
        <end position="620"/>
    </location>
</feature>
<feature type="domain" description="Bromo" evidence="3">
    <location>
        <begin position="124"/>
        <end position="230"/>
    </location>
</feature>
<feature type="domain" description="NET" evidence="4">
    <location>
        <begin position="270"/>
        <end position="351"/>
    </location>
</feature>
<feature type="region of interest" description="Disordered" evidence="5">
    <location>
        <begin position="1"/>
        <end position="35"/>
    </location>
</feature>
<feature type="region of interest" description="Transcription activation domain">
    <location>
        <begin position="445"/>
        <end position="620"/>
    </location>
</feature>
<feature type="region of interest" description="Disordered" evidence="5">
    <location>
        <begin position="491"/>
        <end position="511"/>
    </location>
</feature>
<feature type="region of interest" description="Disordered" evidence="5">
    <location>
        <begin position="597"/>
        <end position="620"/>
    </location>
</feature>
<feature type="coiled-coil region" evidence="2">
    <location>
        <begin position="470"/>
        <end position="544"/>
    </location>
</feature>
<feature type="modified residue" description="Phosphoserine" evidence="1">
    <location>
        <position position="417"/>
    </location>
</feature>